<feature type="chain" id="PRO_1000137577" description="Protein GrpE">
    <location>
        <begin position="1"/>
        <end position="191"/>
    </location>
</feature>
<feature type="region of interest" description="Disordered" evidence="2">
    <location>
        <begin position="1"/>
        <end position="22"/>
    </location>
</feature>
<gene>
    <name evidence="1" type="primary">grpE</name>
    <name type="ordered locus">HPSH_00555</name>
</gene>
<comment type="function">
    <text evidence="1">Participates actively in the response to hyperosmotic and heat shock by preventing the aggregation of stress-denatured proteins, in association with DnaK and GrpE. It is the nucleotide exchange factor for DnaK and may function as a thermosensor. Unfolded proteins bind initially to DnaJ; upon interaction with the DnaJ-bound protein, DnaK hydrolyzes its bound ATP, resulting in the formation of a stable complex. GrpE releases ADP from DnaK; ATP binding to DnaK triggers the release of the substrate protein, thus completing the reaction cycle. Several rounds of ATP-dependent interactions between DnaJ, DnaK and GrpE are required for fully efficient folding.</text>
</comment>
<comment type="subunit">
    <text evidence="1">Homodimer.</text>
</comment>
<comment type="subcellular location">
    <subcellularLocation>
        <location evidence="1">Cytoplasm</location>
    </subcellularLocation>
</comment>
<comment type="similarity">
    <text evidence="1">Belongs to the GrpE family.</text>
</comment>
<dbReference type="EMBL" id="CP001072">
    <property type="protein sequence ID" value="ACD47571.1"/>
    <property type="molecule type" value="Genomic_DNA"/>
</dbReference>
<dbReference type="RefSeq" id="WP_000653244.1">
    <property type="nucleotide sequence ID" value="NC_010698.2"/>
</dbReference>
<dbReference type="SMR" id="B2URT9"/>
<dbReference type="KEGG" id="hps:HPSH_00555"/>
<dbReference type="HOGENOM" id="CLU_057217_6_3_7"/>
<dbReference type="GO" id="GO:0005829">
    <property type="term" value="C:cytosol"/>
    <property type="evidence" value="ECO:0007669"/>
    <property type="project" value="TreeGrafter"/>
</dbReference>
<dbReference type="GO" id="GO:0000774">
    <property type="term" value="F:adenyl-nucleotide exchange factor activity"/>
    <property type="evidence" value="ECO:0007669"/>
    <property type="project" value="InterPro"/>
</dbReference>
<dbReference type="GO" id="GO:0042803">
    <property type="term" value="F:protein homodimerization activity"/>
    <property type="evidence" value="ECO:0007669"/>
    <property type="project" value="InterPro"/>
</dbReference>
<dbReference type="GO" id="GO:0051087">
    <property type="term" value="F:protein-folding chaperone binding"/>
    <property type="evidence" value="ECO:0007669"/>
    <property type="project" value="InterPro"/>
</dbReference>
<dbReference type="GO" id="GO:0051082">
    <property type="term" value="F:unfolded protein binding"/>
    <property type="evidence" value="ECO:0007669"/>
    <property type="project" value="TreeGrafter"/>
</dbReference>
<dbReference type="GO" id="GO:0006457">
    <property type="term" value="P:protein folding"/>
    <property type="evidence" value="ECO:0007669"/>
    <property type="project" value="InterPro"/>
</dbReference>
<dbReference type="CDD" id="cd00446">
    <property type="entry name" value="GrpE"/>
    <property type="match status" value="1"/>
</dbReference>
<dbReference type="FunFam" id="2.30.22.10:FF:000001">
    <property type="entry name" value="Protein GrpE"/>
    <property type="match status" value="1"/>
</dbReference>
<dbReference type="Gene3D" id="3.90.20.20">
    <property type="match status" value="1"/>
</dbReference>
<dbReference type="Gene3D" id="2.30.22.10">
    <property type="entry name" value="Head domain of nucleotide exchange factor GrpE"/>
    <property type="match status" value="1"/>
</dbReference>
<dbReference type="HAMAP" id="MF_01151">
    <property type="entry name" value="GrpE"/>
    <property type="match status" value="1"/>
</dbReference>
<dbReference type="InterPro" id="IPR000740">
    <property type="entry name" value="GrpE"/>
</dbReference>
<dbReference type="InterPro" id="IPR013805">
    <property type="entry name" value="GrpE_coiled_coil"/>
</dbReference>
<dbReference type="InterPro" id="IPR009012">
    <property type="entry name" value="GrpE_head"/>
</dbReference>
<dbReference type="NCBIfam" id="NF010738">
    <property type="entry name" value="PRK14140.1"/>
    <property type="match status" value="1"/>
</dbReference>
<dbReference type="NCBIfam" id="NF010747">
    <property type="entry name" value="PRK14149.1"/>
    <property type="match status" value="1"/>
</dbReference>
<dbReference type="PANTHER" id="PTHR21237">
    <property type="entry name" value="GRPE PROTEIN"/>
    <property type="match status" value="1"/>
</dbReference>
<dbReference type="PANTHER" id="PTHR21237:SF23">
    <property type="entry name" value="GRPE PROTEIN HOMOLOG, MITOCHONDRIAL"/>
    <property type="match status" value="1"/>
</dbReference>
<dbReference type="Pfam" id="PF01025">
    <property type="entry name" value="GrpE"/>
    <property type="match status" value="1"/>
</dbReference>
<dbReference type="PRINTS" id="PR00773">
    <property type="entry name" value="GRPEPROTEIN"/>
</dbReference>
<dbReference type="SUPFAM" id="SSF58014">
    <property type="entry name" value="Coiled-coil domain of nucleotide exchange factor GrpE"/>
    <property type="match status" value="1"/>
</dbReference>
<dbReference type="SUPFAM" id="SSF51064">
    <property type="entry name" value="Head domain of nucleotide exchange factor GrpE"/>
    <property type="match status" value="1"/>
</dbReference>
<dbReference type="PROSITE" id="PS01071">
    <property type="entry name" value="GRPE"/>
    <property type="match status" value="1"/>
</dbReference>
<accession>B2URT9</accession>
<protein>
    <recommendedName>
        <fullName evidence="1">Protein GrpE</fullName>
    </recommendedName>
    <alternativeName>
        <fullName evidence="1">HSP-70 cofactor</fullName>
    </alternativeName>
</protein>
<keyword id="KW-0143">Chaperone</keyword>
<keyword id="KW-0963">Cytoplasm</keyword>
<keyword id="KW-0346">Stress response</keyword>
<proteinExistence type="inferred from homology"/>
<reference key="1">
    <citation type="submission" date="2008-05" db="EMBL/GenBank/DDBJ databases">
        <title>Genome sequence of Helicobacter pylori from the remote Amazon: traces of Asian ancestry of the first Americans.</title>
        <authorList>
            <person name="Kersulyte D."/>
            <person name="Kalia A."/>
            <person name="Gilman R.H."/>
            <person name="Berg D.E."/>
        </authorList>
    </citation>
    <scope>NUCLEOTIDE SEQUENCE [LARGE SCALE GENOMIC DNA]</scope>
    <source>
        <strain>Shi470</strain>
    </source>
</reference>
<name>GRPE_HELPS</name>
<sequence>MKDKHNQEHDHLSQEEPESCEKACACKEQQGEEMQEASGKECEIKEDFELKYQEMHEKYLRVHADFENVKKRLERDKSMALEYAYEKIALDLLPVIDALLGAHRSAAEVDKESALTKGLELTMEKLHEVLARHGIEGIECLEEFDPNFHNAIMQVKSEEKENGKIVQVLQQGYKYKGRVLRPAMVSIAKND</sequence>
<evidence type="ECO:0000255" key="1">
    <source>
        <dbReference type="HAMAP-Rule" id="MF_01151"/>
    </source>
</evidence>
<evidence type="ECO:0000256" key="2">
    <source>
        <dbReference type="SAM" id="MobiDB-lite"/>
    </source>
</evidence>
<organism>
    <name type="scientific">Helicobacter pylori (strain Shi470)</name>
    <dbReference type="NCBI Taxonomy" id="512562"/>
    <lineage>
        <taxon>Bacteria</taxon>
        <taxon>Pseudomonadati</taxon>
        <taxon>Campylobacterota</taxon>
        <taxon>Epsilonproteobacteria</taxon>
        <taxon>Campylobacterales</taxon>
        <taxon>Helicobacteraceae</taxon>
        <taxon>Helicobacter</taxon>
    </lineage>
</organism>